<comment type="function">
    <text evidence="1">FAD-dependent sulfhydryl oxidase that catalyzes the formation of disulfide bonds in viral proteins produced in the cell cytoplasm.</text>
</comment>
<comment type="catalytic activity">
    <reaction>
        <text>2 R'C(R)SH + O2 = R'C(R)S-S(R)CR' + H2O2</text>
        <dbReference type="Rhea" id="RHEA:17357"/>
        <dbReference type="ChEBI" id="CHEBI:15379"/>
        <dbReference type="ChEBI" id="CHEBI:16240"/>
        <dbReference type="ChEBI" id="CHEBI:16520"/>
        <dbReference type="ChEBI" id="CHEBI:17412"/>
        <dbReference type="EC" id="1.8.3.2"/>
    </reaction>
</comment>
<comment type="cofactor">
    <cofactor evidence="2">
        <name>FAD</name>
        <dbReference type="ChEBI" id="CHEBI:57692"/>
    </cofactor>
</comment>
<comment type="subunit">
    <text evidence="1">Interacts with A151R.</text>
</comment>
<comment type="subcellular location">
    <subcellularLocation>
        <location evidence="1">Host cytoplasm</location>
    </subcellularLocation>
    <subcellularLocation>
        <location evidence="1">Virion</location>
    </subcellularLocation>
</comment>
<comment type="induction">
    <text evidence="1">Expressed the late phase of the replicative cycle.</text>
</comment>
<comment type="similarity">
    <text evidence="3">Belongs to the asfivirus B119L family.</text>
</comment>
<sequence length="119" mass="14390">MLHWGPKFWRALHLYAIFFSDAPNWKEKYEAIQWILNFIESLPCTMCRHHAFSYLTKNPLTLNNSEDFQYWTFAFHNNVNKRLNKKIISWSEYKNIYEQSILKTIEYGKTDFIGAWSSL</sequence>
<proteinExistence type="inferred from homology"/>
<name>FLSO_ASFK5</name>
<accession>P0C8G8</accession>
<feature type="chain" id="PRO_0000355535" description="FAD-linked sulfhydryl oxidase">
    <location>
        <begin position="1"/>
        <end position="119"/>
    </location>
</feature>
<feature type="domain" description="ERV/ALR sulfhydryl oxidase" evidence="2">
    <location>
        <begin position="1"/>
        <end position="97"/>
    </location>
</feature>
<feature type="disulfide bond" description="Redox-active" evidence="2">
    <location>
        <begin position="44"/>
        <end position="47"/>
    </location>
</feature>
<protein>
    <recommendedName>
        <fullName evidence="1">FAD-linked sulfhydryl oxidase</fullName>
        <ecNumber evidence="1">1.8.3.2</ecNumber>
    </recommendedName>
    <alternativeName>
        <fullName>p14</fullName>
    </alternativeName>
</protein>
<evidence type="ECO:0000250" key="1">
    <source>
        <dbReference type="UniProtKB" id="Q65163"/>
    </source>
</evidence>
<evidence type="ECO:0000255" key="2">
    <source>
        <dbReference type="PROSITE-ProRule" id="PRU00654"/>
    </source>
</evidence>
<evidence type="ECO:0000305" key="3"/>
<organismHost>
    <name type="scientific">Ornithodoros</name>
    <name type="common">relapsing fever ticks</name>
    <dbReference type="NCBI Taxonomy" id="6937"/>
</organismHost>
<organismHost>
    <name type="scientific">Phacochoerus aethiopicus</name>
    <name type="common">Warthog</name>
    <dbReference type="NCBI Taxonomy" id="85517"/>
</organismHost>
<organismHost>
    <name type="scientific">Phacochoerus africanus</name>
    <name type="common">Warthog</name>
    <dbReference type="NCBI Taxonomy" id="41426"/>
</organismHost>
<organismHost>
    <name type="scientific">Potamochoerus larvatus</name>
    <name type="common">Bushpig</name>
    <dbReference type="NCBI Taxonomy" id="273792"/>
</organismHost>
<organismHost>
    <name type="scientific">Sus scrofa</name>
    <name type="common">Pig</name>
    <dbReference type="NCBI Taxonomy" id="9823"/>
</organismHost>
<dbReference type="EC" id="1.8.3.2" evidence="1"/>
<dbReference type="EMBL" id="AY261360">
    <property type="status" value="NOT_ANNOTATED_CDS"/>
    <property type="molecule type" value="Genomic_DNA"/>
</dbReference>
<dbReference type="SMR" id="P0C8G8"/>
<dbReference type="Proteomes" id="UP000000861">
    <property type="component" value="Segment"/>
</dbReference>
<dbReference type="GO" id="GO:0030430">
    <property type="term" value="C:host cell cytoplasm"/>
    <property type="evidence" value="ECO:0007669"/>
    <property type="project" value="UniProtKB-SubCell"/>
</dbReference>
<dbReference type="GO" id="GO:0044423">
    <property type="term" value="C:virion component"/>
    <property type="evidence" value="ECO:0007669"/>
    <property type="project" value="UniProtKB-KW"/>
</dbReference>
<dbReference type="GO" id="GO:0050660">
    <property type="term" value="F:flavin adenine dinucleotide binding"/>
    <property type="evidence" value="ECO:0007669"/>
    <property type="project" value="TreeGrafter"/>
</dbReference>
<dbReference type="GO" id="GO:0016971">
    <property type="term" value="F:flavin-dependent sulfhydryl oxidase activity"/>
    <property type="evidence" value="ECO:0007669"/>
    <property type="project" value="InterPro"/>
</dbReference>
<dbReference type="FunFam" id="1.20.120.310:FF:000009">
    <property type="entry name" value="FAD-linked sulfhydryl oxidase"/>
    <property type="match status" value="1"/>
</dbReference>
<dbReference type="Gene3D" id="1.20.120.310">
    <property type="entry name" value="ERV/ALR sulfhydryl oxidase domain"/>
    <property type="match status" value="1"/>
</dbReference>
<dbReference type="InterPro" id="IPR039799">
    <property type="entry name" value="ALR/ERV"/>
</dbReference>
<dbReference type="InterPro" id="IPR036774">
    <property type="entry name" value="ERV/ALR_sulphydryl_oxid_sf"/>
</dbReference>
<dbReference type="InterPro" id="IPR017905">
    <property type="entry name" value="ERV/ALR_sulphydryl_oxidase"/>
</dbReference>
<dbReference type="PANTHER" id="PTHR12645">
    <property type="entry name" value="ALR/ERV"/>
    <property type="match status" value="1"/>
</dbReference>
<dbReference type="PANTHER" id="PTHR12645:SF0">
    <property type="entry name" value="FAD-LINKED SULFHYDRYL OXIDASE ALR"/>
    <property type="match status" value="1"/>
</dbReference>
<dbReference type="Pfam" id="PF04777">
    <property type="entry name" value="Evr1_Alr"/>
    <property type="match status" value="1"/>
</dbReference>
<dbReference type="SUPFAM" id="SSF69000">
    <property type="entry name" value="FAD-dependent thiol oxidase"/>
    <property type="match status" value="1"/>
</dbReference>
<dbReference type="PROSITE" id="PS51324">
    <property type="entry name" value="ERV_ALR"/>
    <property type="match status" value="1"/>
</dbReference>
<organism>
    <name type="scientific">African swine fever virus (isolate Pig/Kenya/KEN-50/1950)</name>
    <name type="common">ASFV</name>
    <dbReference type="NCBI Taxonomy" id="561445"/>
    <lineage>
        <taxon>Viruses</taxon>
        <taxon>Varidnaviria</taxon>
        <taxon>Bamfordvirae</taxon>
        <taxon>Nucleocytoviricota</taxon>
        <taxon>Pokkesviricetes</taxon>
        <taxon>Asfuvirales</taxon>
        <taxon>Asfarviridae</taxon>
        <taxon>Asfivirus</taxon>
        <taxon>African swine fever virus</taxon>
    </lineage>
</organism>
<gene>
    <name type="ordered locus">Ken-085</name>
</gene>
<keyword id="KW-1015">Disulfide bond</keyword>
<keyword id="KW-0274">FAD</keyword>
<keyword id="KW-0285">Flavoprotein</keyword>
<keyword id="KW-1035">Host cytoplasm</keyword>
<keyword id="KW-0426">Late protein</keyword>
<keyword id="KW-0560">Oxidoreductase</keyword>
<keyword id="KW-0946">Virion</keyword>
<keyword id="KW-0843">Virulence</keyword>
<reference key="1">
    <citation type="submission" date="2003-03" db="EMBL/GenBank/DDBJ databases">
        <title>African swine fever virus genomes.</title>
        <authorList>
            <person name="Kutish G.F."/>
            <person name="Rock D.L."/>
        </authorList>
    </citation>
    <scope>NUCLEOTIDE SEQUENCE [LARGE SCALE GENOMIC DNA]</scope>
</reference>